<feature type="chain" id="PRO_0000304791" description="GPN-loop GTPase 3">
    <location>
        <begin position="1"/>
        <end position="284"/>
    </location>
</feature>
<feature type="region of interest" description="Disordered" evidence="3">
    <location>
        <begin position="262"/>
        <end position="284"/>
    </location>
</feature>
<feature type="short sequence motif" description="Gly-Pro-Asn (GPN)-loop; involved in dimer interface" evidence="2">
    <location>
        <begin position="72"/>
        <end position="74"/>
    </location>
</feature>
<feature type="binding site" evidence="2">
    <location>
        <begin position="13"/>
        <end position="18"/>
    </location>
    <ligand>
        <name>GTP</name>
        <dbReference type="ChEBI" id="CHEBI:37565"/>
    </ligand>
</feature>
<feature type="binding site" evidence="2">
    <location>
        <begin position="174"/>
        <end position="177"/>
    </location>
    <ligand>
        <name>GTP</name>
        <dbReference type="ChEBI" id="CHEBI:37565"/>
    </ligand>
</feature>
<feature type="site" description="Stabilizes the phosphate intermediate; shared with dimeric partner" evidence="2">
    <location>
        <position position="74"/>
    </location>
</feature>
<proteinExistence type="evidence at transcript level"/>
<sequence length="284" mass="32790">MPRYAQLVMGPAGSGKSTYCSTMVQHCEALNRSVQVVNLDPAAEHFNYPVMADIRELIEVDDVMEDESLRFGPNGGLVFCMEYFANNFDWLENCLGHVEDDYILFDCPGQIELYTHLPVMKQLVQQLEQWEFRVCGVFLVDSQFMVESFKFISGILAALSAMVSLEIPQVNIMTKMDLLSKKAKKEIEKFLDPDMYSLIDDSTGDLRSQKFKKLTKAVCGLVDDYSMVRFLPYDQSDEESMNIVLQHIDFAIQYGEDLEFKEPREHEEESSSMFDEYFQERQNE</sequence>
<accession>Q9D3W4</accession>
<accession>Q8BU32</accession>
<reference key="1">
    <citation type="journal article" date="2005" name="Science">
        <title>The transcriptional landscape of the mammalian genome.</title>
        <authorList>
            <person name="Carninci P."/>
            <person name="Kasukawa T."/>
            <person name="Katayama S."/>
            <person name="Gough J."/>
            <person name="Frith M.C."/>
            <person name="Maeda N."/>
            <person name="Oyama R."/>
            <person name="Ravasi T."/>
            <person name="Lenhard B."/>
            <person name="Wells C."/>
            <person name="Kodzius R."/>
            <person name="Shimokawa K."/>
            <person name="Bajic V.B."/>
            <person name="Brenner S.E."/>
            <person name="Batalov S."/>
            <person name="Forrest A.R."/>
            <person name="Zavolan M."/>
            <person name="Davis M.J."/>
            <person name="Wilming L.G."/>
            <person name="Aidinis V."/>
            <person name="Allen J.E."/>
            <person name="Ambesi-Impiombato A."/>
            <person name="Apweiler R."/>
            <person name="Aturaliya R.N."/>
            <person name="Bailey T.L."/>
            <person name="Bansal M."/>
            <person name="Baxter L."/>
            <person name="Beisel K.W."/>
            <person name="Bersano T."/>
            <person name="Bono H."/>
            <person name="Chalk A.M."/>
            <person name="Chiu K.P."/>
            <person name="Choudhary V."/>
            <person name="Christoffels A."/>
            <person name="Clutterbuck D.R."/>
            <person name="Crowe M.L."/>
            <person name="Dalla E."/>
            <person name="Dalrymple B.P."/>
            <person name="de Bono B."/>
            <person name="Della Gatta G."/>
            <person name="di Bernardo D."/>
            <person name="Down T."/>
            <person name="Engstrom P."/>
            <person name="Fagiolini M."/>
            <person name="Faulkner G."/>
            <person name="Fletcher C.F."/>
            <person name="Fukushima T."/>
            <person name="Furuno M."/>
            <person name="Futaki S."/>
            <person name="Gariboldi M."/>
            <person name="Georgii-Hemming P."/>
            <person name="Gingeras T.R."/>
            <person name="Gojobori T."/>
            <person name="Green R.E."/>
            <person name="Gustincich S."/>
            <person name="Harbers M."/>
            <person name="Hayashi Y."/>
            <person name="Hensch T.K."/>
            <person name="Hirokawa N."/>
            <person name="Hill D."/>
            <person name="Huminiecki L."/>
            <person name="Iacono M."/>
            <person name="Ikeo K."/>
            <person name="Iwama A."/>
            <person name="Ishikawa T."/>
            <person name="Jakt M."/>
            <person name="Kanapin A."/>
            <person name="Katoh M."/>
            <person name="Kawasawa Y."/>
            <person name="Kelso J."/>
            <person name="Kitamura H."/>
            <person name="Kitano H."/>
            <person name="Kollias G."/>
            <person name="Krishnan S.P."/>
            <person name="Kruger A."/>
            <person name="Kummerfeld S.K."/>
            <person name="Kurochkin I.V."/>
            <person name="Lareau L.F."/>
            <person name="Lazarevic D."/>
            <person name="Lipovich L."/>
            <person name="Liu J."/>
            <person name="Liuni S."/>
            <person name="McWilliam S."/>
            <person name="Madan Babu M."/>
            <person name="Madera M."/>
            <person name="Marchionni L."/>
            <person name="Matsuda H."/>
            <person name="Matsuzawa S."/>
            <person name="Miki H."/>
            <person name="Mignone F."/>
            <person name="Miyake S."/>
            <person name="Morris K."/>
            <person name="Mottagui-Tabar S."/>
            <person name="Mulder N."/>
            <person name="Nakano N."/>
            <person name="Nakauchi H."/>
            <person name="Ng P."/>
            <person name="Nilsson R."/>
            <person name="Nishiguchi S."/>
            <person name="Nishikawa S."/>
            <person name="Nori F."/>
            <person name="Ohara O."/>
            <person name="Okazaki Y."/>
            <person name="Orlando V."/>
            <person name="Pang K.C."/>
            <person name="Pavan W.J."/>
            <person name="Pavesi G."/>
            <person name="Pesole G."/>
            <person name="Petrovsky N."/>
            <person name="Piazza S."/>
            <person name="Reed J."/>
            <person name="Reid J.F."/>
            <person name="Ring B.Z."/>
            <person name="Ringwald M."/>
            <person name="Rost B."/>
            <person name="Ruan Y."/>
            <person name="Salzberg S.L."/>
            <person name="Sandelin A."/>
            <person name="Schneider C."/>
            <person name="Schoenbach C."/>
            <person name="Sekiguchi K."/>
            <person name="Semple C.A."/>
            <person name="Seno S."/>
            <person name="Sessa L."/>
            <person name="Sheng Y."/>
            <person name="Shibata Y."/>
            <person name="Shimada H."/>
            <person name="Shimada K."/>
            <person name="Silva D."/>
            <person name="Sinclair B."/>
            <person name="Sperling S."/>
            <person name="Stupka E."/>
            <person name="Sugiura K."/>
            <person name="Sultana R."/>
            <person name="Takenaka Y."/>
            <person name="Taki K."/>
            <person name="Tammoja K."/>
            <person name="Tan S.L."/>
            <person name="Tang S."/>
            <person name="Taylor M.S."/>
            <person name="Tegner J."/>
            <person name="Teichmann S.A."/>
            <person name="Ueda H.R."/>
            <person name="van Nimwegen E."/>
            <person name="Verardo R."/>
            <person name="Wei C.L."/>
            <person name="Yagi K."/>
            <person name="Yamanishi H."/>
            <person name="Zabarovsky E."/>
            <person name="Zhu S."/>
            <person name="Zimmer A."/>
            <person name="Hide W."/>
            <person name="Bult C."/>
            <person name="Grimmond S.M."/>
            <person name="Teasdale R.D."/>
            <person name="Liu E.T."/>
            <person name="Brusic V."/>
            <person name="Quackenbush J."/>
            <person name="Wahlestedt C."/>
            <person name="Mattick J.S."/>
            <person name="Hume D.A."/>
            <person name="Kai C."/>
            <person name="Sasaki D."/>
            <person name="Tomaru Y."/>
            <person name="Fukuda S."/>
            <person name="Kanamori-Katayama M."/>
            <person name="Suzuki M."/>
            <person name="Aoki J."/>
            <person name="Arakawa T."/>
            <person name="Iida J."/>
            <person name="Imamura K."/>
            <person name="Itoh M."/>
            <person name="Kato T."/>
            <person name="Kawaji H."/>
            <person name="Kawagashira N."/>
            <person name="Kawashima T."/>
            <person name="Kojima M."/>
            <person name="Kondo S."/>
            <person name="Konno H."/>
            <person name="Nakano K."/>
            <person name="Ninomiya N."/>
            <person name="Nishio T."/>
            <person name="Okada M."/>
            <person name="Plessy C."/>
            <person name="Shibata K."/>
            <person name="Shiraki T."/>
            <person name="Suzuki S."/>
            <person name="Tagami M."/>
            <person name="Waki K."/>
            <person name="Watahiki A."/>
            <person name="Okamura-Oho Y."/>
            <person name="Suzuki H."/>
            <person name="Kawai J."/>
            <person name="Hayashizaki Y."/>
        </authorList>
    </citation>
    <scope>NUCLEOTIDE SEQUENCE [LARGE SCALE MRNA]</scope>
    <source>
        <strain>C57BL/6J</strain>
        <strain>NOD</strain>
        <tissue>Kidney</tissue>
        <tissue>Retina</tissue>
        <tissue>Testis</tissue>
        <tissue>Thymus</tissue>
    </source>
</reference>
<reference key="2">
    <citation type="journal article" date="2004" name="Genome Res.">
        <title>The status, quality, and expansion of the NIH full-length cDNA project: the Mammalian Gene Collection (MGC).</title>
        <authorList>
            <consortium name="The MGC Project Team"/>
        </authorList>
    </citation>
    <scope>NUCLEOTIDE SEQUENCE [LARGE SCALE MRNA]</scope>
    <source>
        <strain>NMRI</strain>
        <tissue>Mammary tumor</tissue>
    </source>
</reference>
<organism>
    <name type="scientific">Mus musculus</name>
    <name type="common">Mouse</name>
    <dbReference type="NCBI Taxonomy" id="10090"/>
    <lineage>
        <taxon>Eukaryota</taxon>
        <taxon>Metazoa</taxon>
        <taxon>Chordata</taxon>
        <taxon>Craniata</taxon>
        <taxon>Vertebrata</taxon>
        <taxon>Euteleostomi</taxon>
        <taxon>Mammalia</taxon>
        <taxon>Eutheria</taxon>
        <taxon>Euarchontoglires</taxon>
        <taxon>Glires</taxon>
        <taxon>Rodentia</taxon>
        <taxon>Myomorpha</taxon>
        <taxon>Muroidea</taxon>
        <taxon>Muridae</taxon>
        <taxon>Murinae</taxon>
        <taxon>Mus</taxon>
        <taxon>Mus</taxon>
    </lineage>
</organism>
<evidence type="ECO:0000250" key="1">
    <source>
        <dbReference type="UniProtKB" id="Q9UHW5"/>
    </source>
</evidence>
<evidence type="ECO:0000250" key="2">
    <source>
        <dbReference type="UniProtKB" id="Q9UYR9"/>
    </source>
</evidence>
<evidence type="ECO:0000256" key="3">
    <source>
        <dbReference type="SAM" id="MobiDB-lite"/>
    </source>
</evidence>
<evidence type="ECO:0000305" key="4"/>
<keyword id="KW-0342">GTP-binding</keyword>
<keyword id="KW-0378">Hydrolase</keyword>
<keyword id="KW-0547">Nucleotide-binding</keyword>
<keyword id="KW-1185">Reference proteome</keyword>
<name>GPN3_MOUSE</name>
<protein>
    <recommendedName>
        <fullName evidence="1">GPN-loop GTPase 3</fullName>
    </recommendedName>
    <alternativeName>
        <fullName evidence="1">ATP-binding domain 1 family member C</fullName>
    </alternativeName>
</protein>
<dbReference type="EMBL" id="AK016996">
    <property type="protein sequence ID" value="BAB30544.1"/>
    <property type="molecule type" value="mRNA"/>
</dbReference>
<dbReference type="EMBL" id="AK080720">
    <property type="protein sequence ID" value="BAC37993.1"/>
    <property type="molecule type" value="mRNA"/>
</dbReference>
<dbReference type="EMBL" id="AK087968">
    <property type="protein sequence ID" value="BAC40065.1"/>
    <property type="status" value="ALT_FRAME"/>
    <property type="molecule type" value="mRNA"/>
</dbReference>
<dbReference type="EMBL" id="AK146783">
    <property type="protein sequence ID" value="BAE27429.1"/>
    <property type="molecule type" value="mRNA"/>
</dbReference>
<dbReference type="EMBL" id="BC003341">
    <property type="protein sequence ID" value="AAH03341.1"/>
    <property type="molecule type" value="mRNA"/>
</dbReference>
<dbReference type="CCDS" id="CCDS19647.1"/>
<dbReference type="RefSeq" id="NP_077178.1">
    <property type="nucleotide sequence ID" value="NM_024216.2"/>
</dbReference>
<dbReference type="SMR" id="Q9D3W4"/>
<dbReference type="BioGRID" id="212645">
    <property type="interactions" value="1"/>
</dbReference>
<dbReference type="FunCoup" id="Q9D3W4">
    <property type="interactions" value="1030"/>
</dbReference>
<dbReference type="IntAct" id="Q9D3W4">
    <property type="interactions" value="4"/>
</dbReference>
<dbReference type="MINT" id="Q9D3W4"/>
<dbReference type="STRING" id="10090.ENSMUSP00000031420"/>
<dbReference type="PhosphoSitePlus" id="Q9D3W4"/>
<dbReference type="PaxDb" id="10090-ENSMUSP00000031420"/>
<dbReference type="PeptideAtlas" id="Q9D3W4"/>
<dbReference type="ProteomicsDB" id="271038"/>
<dbReference type="Pumba" id="Q9D3W4"/>
<dbReference type="Antibodypedia" id="31008">
    <property type="antibodies" value="56 antibodies from 16 providers"/>
</dbReference>
<dbReference type="DNASU" id="68080"/>
<dbReference type="Ensembl" id="ENSMUST00000031420.11">
    <property type="protein sequence ID" value="ENSMUSP00000031420.5"/>
    <property type="gene ID" value="ENSMUSG00000029464.11"/>
</dbReference>
<dbReference type="GeneID" id="68080"/>
<dbReference type="KEGG" id="mmu:68080"/>
<dbReference type="UCSC" id="uc008zle.1">
    <property type="organism name" value="mouse"/>
</dbReference>
<dbReference type="AGR" id="MGI:1289326"/>
<dbReference type="CTD" id="51184"/>
<dbReference type="MGI" id="MGI:1289326">
    <property type="gene designation" value="Gpn3"/>
</dbReference>
<dbReference type="VEuPathDB" id="HostDB:ENSMUSG00000029464"/>
<dbReference type="eggNOG" id="KOG1534">
    <property type="taxonomic scope" value="Eukaryota"/>
</dbReference>
<dbReference type="GeneTree" id="ENSGT00950000183172"/>
<dbReference type="InParanoid" id="Q9D3W4"/>
<dbReference type="OMA" id="LYTHMTV"/>
<dbReference type="OrthoDB" id="5839at2759"/>
<dbReference type="PhylomeDB" id="Q9D3W4"/>
<dbReference type="TreeFam" id="TF105810"/>
<dbReference type="BioGRID-ORCS" id="68080">
    <property type="hits" value="27 hits in 59 CRISPR screens"/>
</dbReference>
<dbReference type="ChiTaRS" id="Gpn3">
    <property type="organism name" value="mouse"/>
</dbReference>
<dbReference type="PRO" id="PR:Q9D3W4"/>
<dbReference type="Proteomes" id="UP000000589">
    <property type="component" value="Chromosome 5"/>
</dbReference>
<dbReference type="RNAct" id="Q9D3W4">
    <property type="molecule type" value="protein"/>
</dbReference>
<dbReference type="Bgee" id="ENSMUSG00000029464">
    <property type="expression patterns" value="Expressed in blastoderm cell in morula and 248 other cell types or tissues"/>
</dbReference>
<dbReference type="ExpressionAtlas" id="Q9D3W4">
    <property type="expression patterns" value="baseline and differential"/>
</dbReference>
<dbReference type="GO" id="GO:0032991">
    <property type="term" value="C:protein-containing complex"/>
    <property type="evidence" value="ECO:0007669"/>
    <property type="project" value="Ensembl"/>
</dbReference>
<dbReference type="GO" id="GO:0005525">
    <property type="term" value="F:GTP binding"/>
    <property type="evidence" value="ECO:0007669"/>
    <property type="project" value="UniProtKB-KW"/>
</dbReference>
<dbReference type="GO" id="GO:0016787">
    <property type="term" value="F:hydrolase activity"/>
    <property type="evidence" value="ECO:0007669"/>
    <property type="project" value="UniProtKB-KW"/>
</dbReference>
<dbReference type="CDD" id="cd17872">
    <property type="entry name" value="GPN3"/>
    <property type="match status" value="1"/>
</dbReference>
<dbReference type="FunFam" id="3.40.50.300:FF:000616">
    <property type="entry name" value="GPN-loop GTPase 3"/>
    <property type="match status" value="1"/>
</dbReference>
<dbReference type="Gene3D" id="3.40.50.300">
    <property type="entry name" value="P-loop containing nucleotide triphosphate hydrolases"/>
    <property type="match status" value="1"/>
</dbReference>
<dbReference type="InterPro" id="IPR004130">
    <property type="entry name" value="Gpn"/>
</dbReference>
<dbReference type="InterPro" id="IPR030228">
    <property type="entry name" value="Gpn3"/>
</dbReference>
<dbReference type="InterPro" id="IPR027417">
    <property type="entry name" value="P-loop_NTPase"/>
</dbReference>
<dbReference type="PANTHER" id="PTHR21231:SF7">
    <property type="entry name" value="GPN-LOOP GTPASE 3"/>
    <property type="match status" value="1"/>
</dbReference>
<dbReference type="PANTHER" id="PTHR21231">
    <property type="entry name" value="XPA-BINDING PROTEIN 1-RELATED"/>
    <property type="match status" value="1"/>
</dbReference>
<dbReference type="Pfam" id="PF03029">
    <property type="entry name" value="ATP_bind_1"/>
    <property type="match status" value="1"/>
</dbReference>
<dbReference type="SUPFAM" id="SSF52540">
    <property type="entry name" value="P-loop containing nucleoside triphosphate hydrolases"/>
    <property type="match status" value="1"/>
</dbReference>
<comment type="function">
    <text evidence="1">Small GTPase required for proper localization of RNA polymerase II (RNAPII). May act at an RNAP assembly step prior to nuclear import.</text>
</comment>
<comment type="subunit">
    <text evidence="1">Heterodimer with GPN1. Binds to RNA polymerase II (RNAPII). Interacts directly with subunits RPB4 and RPB7 and the CTD of RPB1.</text>
</comment>
<comment type="similarity">
    <text evidence="4">Belongs to the GPN-loop GTPase family.</text>
</comment>
<comment type="sequence caution" evidence="4">
    <conflict type="frameshift">
        <sequence resource="EMBL-CDS" id="BAC40065"/>
    </conflict>
</comment>
<gene>
    <name evidence="1" type="primary">Gpn3</name>
    <name evidence="1" type="synonym">Atpbd1c</name>
    <name type="synonym">D5Ertd708e</name>
</gene>